<proteinExistence type="inferred from homology"/>
<reference key="1">
    <citation type="journal article" date="2003" name="PLoS Biol.">
        <title>The genome sequence of Caenorhabditis briggsae: a platform for comparative genomics.</title>
        <authorList>
            <person name="Stein L.D."/>
            <person name="Bao Z."/>
            <person name="Blasiar D."/>
            <person name="Blumenthal T."/>
            <person name="Brent M.R."/>
            <person name="Chen N."/>
            <person name="Chinwalla A."/>
            <person name="Clarke L."/>
            <person name="Clee C."/>
            <person name="Coghlan A."/>
            <person name="Coulson A."/>
            <person name="D'Eustachio P."/>
            <person name="Fitch D.H.A."/>
            <person name="Fulton L.A."/>
            <person name="Fulton R.E."/>
            <person name="Griffiths-Jones S."/>
            <person name="Harris T.W."/>
            <person name="Hillier L.W."/>
            <person name="Kamath R."/>
            <person name="Kuwabara P.E."/>
            <person name="Mardis E.R."/>
            <person name="Marra M.A."/>
            <person name="Miner T.L."/>
            <person name="Minx P."/>
            <person name="Mullikin J.C."/>
            <person name="Plumb R.W."/>
            <person name="Rogers J."/>
            <person name="Schein J.E."/>
            <person name="Sohrmann M."/>
            <person name="Spieth J."/>
            <person name="Stajich J.E."/>
            <person name="Wei C."/>
            <person name="Willey D."/>
            <person name="Wilson R.K."/>
            <person name="Durbin R.M."/>
            <person name="Waterston R.H."/>
        </authorList>
    </citation>
    <scope>NUCLEOTIDE SEQUENCE [LARGE SCALE GENOMIC DNA]</scope>
    <source>
        <strain>AF16</strain>
    </source>
</reference>
<accession>Q60M68</accession>
<accession>A8Y4A5</accession>
<accession>H8WHD0</accession>
<comment type="function">
    <text evidence="1">Component of the nuclear pore complex (NPC), which plays a key role in de novo assembly and insertion of NPC in the nuclear envelope.</text>
</comment>
<comment type="subcellular location">
    <subcellularLocation>
        <location evidence="1">Nucleus</location>
        <location evidence="1">Nuclear pore complex</location>
    </subcellularLocation>
    <subcellularLocation>
        <location evidence="1">Nucleus membrane</location>
        <topology evidence="1">Multi-pass membrane protein</topology>
    </subcellularLocation>
    <text evidence="1">Central core structure of the nuclear pore complex.</text>
</comment>
<comment type="similarity">
    <text evidence="4">Belongs to the NDC1 family.</text>
</comment>
<sequence length="587" mass="66206">MMGENSSAYTTLADNQLYNQFSPSRRKADLIASTSATSSPNLRKSPNRGFSSPRAQQKPITIFDQIVSWFHSEIDVRKKLASFVCGAAVALSFIVTVSILKLSIWAPFSSVQDSLTWWLYPTSWPVTLFIWLSSVAWTFLIIHQFCTVTQVPRIPITDTYAWAGAALEFVHRLIFVYTAFTVSESSFFEDFAWIAIAFSVAISSALVIFRSDFHLNFSNVQVNSFKTLIDFAKSLPYGSLAETSGVDAAIAYTAAMALTVFGSPLLWGFSAWWLLINIQFHLVLFGVCFAQQFFAKIFMKIVNQIVMKPMKFPFPPPYTVHSPTPDQIRTLPNVIETDDPLLKMFALHDLRTVAWEDEKRRVDVFSLSQPGKHPRNWKAVSMPCTRMLDELCSRMTVSAARLVGYSWDDHDVENEEVPRDALMMPRKMREMTYRGAGQSRQQKTIAPIRSNNTQTVGFLAKITRNLGLGKTERLVISRFDAQQNAYAAEAVYMLVVDSMGEDRFGVVQKDLKDLITLLCKLIAAIDTYERAKASVADKSDVTYLRLVDASLKSCLQRVVTTFGSHLRSLELADEHIRTIKLVCAEEI</sequence>
<dbReference type="EMBL" id="HE601533">
    <property type="protein sequence ID" value="CCG58597.1"/>
    <property type="molecule type" value="Genomic_DNA"/>
</dbReference>
<dbReference type="SMR" id="Q60M68"/>
<dbReference type="FunCoup" id="Q60M68">
    <property type="interactions" value="1776"/>
</dbReference>
<dbReference type="STRING" id="6238.Q60M68"/>
<dbReference type="EnsemblMetazoa" id="CBG29121.1">
    <property type="protein sequence ID" value="CBG29121.1"/>
    <property type="gene ID" value="WBGene00219320"/>
</dbReference>
<dbReference type="WormBase" id="CBG29121">
    <property type="protein sequence ID" value="CBP37908"/>
    <property type="gene ID" value="WBGene00219320"/>
    <property type="gene designation" value="Cbr-npp-22"/>
</dbReference>
<dbReference type="eggNOG" id="KOG3726">
    <property type="taxonomic scope" value="Eukaryota"/>
</dbReference>
<dbReference type="eggNOG" id="KOG4358">
    <property type="taxonomic scope" value="Eukaryota"/>
</dbReference>
<dbReference type="HOGENOM" id="CLU_464804_0_0_1"/>
<dbReference type="InParanoid" id="Q60M68"/>
<dbReference type="OMA" id="ILKAIIC"/>
<dbReference type="Proteomes" id="UP000008549">
    <property type="component" value="Unassembled WGS sequence"/>
</dbReference>
<dbReference type="GO" id="GO:0031965">
    <property type="term" value="C:nuclear membrane"/>
    <property type="evidence" value="ECO:0007669"/>
    <property type="project" value="UniProtKB-SubCell"/>
</dbReference>
<dbReference type="GO" id="GO:0070762">
    <property type="term" value="C:nuclear pore transmembrane ring"/>
    <property type="evidence" value="ECO:0000318"/>
    <property type="project" value="GO_Central"/>
</dbReference>
<dbReference type="GO" id="GO:0030674">
    <property type="term" value="F:protein-macromolecule adaptor activity"/>
    <property type="evidence" value="ECO:0000318"/>
    <property type="project" value="GO_Central"/>
</dbReference>
<dbReference type="GO" id="GO:0051028">
    <property type="term" value="P:mRNA transport"/>
    <property type="evidence" value="ECO:0007669"/>
    <property type="project" value="UniProtKB-KW"/>
</dbReference>
<dbReference type="GO" id="GO:0006999">
    <property type="term" value="P:nuclear pore organization"/>
    <property type="evidence" value="ECO:0000318"/>
    <property type="project" value="GO_Central"/>
</dbReference>
<dbReference type="GO" id="GO:0015031">
    <property type="term" value="P:protein transport"/>
    <property type="evidence" value="ECO:0007669"/>
    <property type="project" value="UniProtKB-KW"/>
</dbReference>
<dbReference type="InterPro" id="IPR019049">
    <property type="entry name" value="Nucleoporin_prot_Ndc1/Nup"/>
</dbReference>
<dbReference type="PANTHER" id="PTHR13269">
    <property type="entry name" value="NUCLEOPORIN NDC1"/>
    <property type="match status" value="1"/>
</dbReference>
<dbReference type="PANTHER" id="PTHR13269:SF6">
    <property type="entry name" value="NUCLEOPORIN NDC1"/>
    <property type="match status" value="1"/>
</dbReference>
<dbReference type="Pfam" id="PF09531">
    <property type="entry name" value="Ndc1_Nup"/>
    <property type="match status" value="2"/>
</dbReference>
<organism>
    <name type="scientific">Caenorhabditis briggsae</name>
    <dbReference type="NCBI Taxonomy" id="6238"/>
    <lineage>
        <taxon>Eukaryota</taxon>
        <taxon>Metazoa</taxon>
        <taxon>Ecdysozoa</taxon>
        <taxon>Nematoda</taxon>
        <taxon>Chromadorea</taxon>
        <taxon>Rhabditida</taxon>
        <taxon>Rhabditina</taxon>
        <taxon>Rhabditomorpha</taxon>
        <taxon>Rhabditoidea</taxon>
        <taxon>Rhabditidae</taxon>
        <taxon>Peloderinae</taxon>
        <taxon>Caenorhabditis</taxon>
    </lineage>
</organism>
<gene>
    <name type="primary">npp-22</name>
    <name type="synonym">ndc-1</name>
    <name evidence="5" type="ORF">CBG29121</name>
</gene>
<keyword id="KW-0472">Membrane</keyword>
<keyword id="KW-0509">mRNA transport</keyword>
<keyword id="KW-0906">Nuclear pore complex</keyword>
<keyword id="KW-0539">Nucleus</keyword>
<keyword id="KW-0653">Protein transport</keyword>
<keyword id="KW-1185">Reference proteome</keyword>
<keyword id="KW-0811">Translocation</keyword>
<keyword id="KW-0812">Transmembrane</keyword>
<keyword id="KW-1133">Transmembrane helix</keyword>
<keyword id="KW-0813">Transport</keyword>
<evidence type="ECO:0000250" key="1"/>
<evidence type="ECO:0000255" key="2"/>
<evidence type="ECO:0000256" key="3">
    <source>
        <dbReference type="SAM" id="MobiDB-lite"/>
    </source>
</evidence>
<evidence type="ECO:0000305" key="4"/>
<evidence type="ECO:0000312" key="5">
    <source>
        <dbReference type="WormBase" id="CBG29121"/>
    </source>
</evidence>
<feature type="chain" id="PRO_0000235246" description="Nucleoporin ndc-1">
    <location>
        <begin position="1"/>
        <end position="587"/>
    </location>
</feature>
<feature type="topological domain" description="Cytoplasmic" evidence="2">
    <location>
        <begin position="1"/>
        <end position="79"/>
    </location>
</feature>
<feature type="transmembrane region" description="Helical; Name=1" evidence="2">
    <location>
        <begin position="80"/>
        <end position="100"/>
    </location>
</feature>
<feature type="topological domain" description="Perinuclear space" evidence="2">
    <location>
        <begin position="101"/>
        <end position="121"/>
    </location>
</feature>
<feature type="transmembrane region" description="Helical; Name=2" evidence="2">
    <location>
        <begin position="122"/>
        <end position="142"/>
    </location>
</feature>
<feature type="topological domain" description="Cytoplasmic" evidence="2">
    <location>
        <begin position="143"/>
        <end position="161"/>
    </location>
</feature>
<feature type="transmembrane region" description="Helical; Name=3" evidence="2">
    <location>
        <begin position="162"/>
        <end position="182"/>
    </location>
</feature>
<feature type="topological domain" description="Perinuclear space" evidence="2">
    <location>
        <begin position="183"/>
        <end position="187"/>
    </location>
</feature>
<feature type="transmembrane region" description="Helical; Name=4" evidence="2">
    <location>
        <begin position="188"/>
        <end position="208"/>
    </location>
</feature>
<feature type="topological domain" description="Cytoplasmic" evidence="2">
    <location>
        <begin position="209"/>
        <end position="255"/>
    </location>
</feature>
<feature type="transmembrane region" description="Helical; Name=5" evidence="2">
    <location>
        <begin position="256"/>
        <end position="276"/>
    </location>
</feature>
<feature type="topological domain" description="Perinuclear space" evidence="2">
    <location>
        <begin position="277"/>
        <end position="281"/>
    </location>
</feature>
<feature type="transmembrane region" description="Helical; Name=6" evidence="2">
    <location>
        <begin position="282"/>
        <end position="302"/>
    </location>
</feature>
<feature type="topological domain" description="Cytoplasmic" evidence="2">
    <location>
        <begin position="303"/>
        <end position="587"/>
    </location>
</feature>
<feature type="region of interest" description="Disordered" evidence="3">
    <location>
        <begin position="32"/>
        <end position="55"/>
    </location>
</feature>
<protein>
    <recommendedName>
        <fullName>Nucleoporin ndc-1</fullName>
    </recommendedName>
    <alternativeName>
        <fullName>Nucleoporin npp-22</fullName>
    </alternativeName>
</protein>
<name>NDC1_CAEBR</name>